<organism>
    <name type="scientific">Enterobacter cloacae subsp. cloacae (strain ATCC 13047 / DSM 30054 / NBRC 13535 / NCTC 10005 / WDCM 00083 / NCDC 279-56)</name>
    <dbReference type="NCBI Taxonomy" id="716541"/>
    <lineage>
        <taxon>Bacteria</taxon>
        <taxon>Pseudomonadati</taxon>
        <taxon>Pseudomonadota</taxon>
        <taxon>Gammaproteobacteria</taxon>
        <taxon>Enterobacterales</taxon>
        <taxon>Enterobacteriaceae</taxon>
        <taxon>Enterobacter</taxon>
        <taxon>Enterobacter cloacae complex</taxon>
    </lineage>
</organism>
<sequence length="266" mass="28592">MKLSVSPPPFDGAPVVVLIAGLGGGGSYWLPQLAALEQEYQVVCYDQRGTGNNPDTLPEEYTLAQMAGELAQALTAVGITRYCVVGHALGALIGLQLALDTPDALKALVCVNGWLTLNAHTRRCFQIRERLLHAGGAQAWVEAQPLFLYPADWMAARAPRLEAEEALALAHFQGKNNLLRRLNALKKADFSRHAARMACPVHLICSADDLLVPSVCSSELQAALPHSHSVVMRQGGHACNVTEPETFNTLLLNGLASLLHSHEPAL</sequence>
<dbReference type="EC" id="3.5.1.-" evidence="1"/>
<dbReference type="EMBL" id="CP001918">
    <property type="protein sequence ID" value="ADF62168.1"/>
    <property type="molecule type" value="Genomic_DNA"/>
</dbReference>
<dbReference type="RefSeq" id="WP_013097196.1">
    <property type="nucleotide sequence ID" value="NC_014121.1"/>
</dbReference>
<dbReference type="RefSeq" id="YP_003613117.1">
    <property type="nucleotide sequence ID" value="NC_014121.1"/>
</dbReference>
<dbReference type="SMR" id="D5CE35"/>
<dbReference type="STRING" id="716541.ECL_02625"/>
<dbReference type="ESTHER" id="entcc-rutd">
    <property type="family name" value="RutD"/>
</dbReference>
<dbReference type="EnsemblBacteria" id="ADF62168">
    <property type="protein sequence ID" value="ADF62168"/>
    <property type="gene ID" value="ECL_02625"/>
</dbReference>
<dbReference type="KEGG" id="enc:ECL_02625"/>
<dbReference type="PATRIC" id="fig|716541.4.peg.2798"/>
<dbReference type="eggNOG" id="COG2267">
    <property type="taxonomic scope" value="Bacteria"/>
</dbReference>
<dbReference type="HOGENOM" id="CLU_020336_50_1_6"/>
<dbReference type="OrthoDB" id="9804723at2"/>
<dbReference type="Proteomes" id="UP000002363">
    <property type="component" value="Chromosome"/>
</dbReference>
<dbReference type="GO" id="GO:0016811">
    <property type="term" value="F:hydrolase activity, acting on carbon-nitrogen (but not peptide) bonds, in linear amides"/>
    <property type="evidence" value="ECO:0007669"/>
    <property type="project" value="InterPro"/>
</dbReference>
<dbReference type="GO" id="GO:0019740">
    <property type="term" value="P:nitrogen utilization"/>
    <property type="evidence" value="ECO:0007669"/>
    <property type="project" value="UniProtKB-UniRule"/>
</dbReference>
<dbReference type="GO" id="GO:0006212">
    <property type="term" value="P:uracil catabolic process"/>
    <property type="evidence" value="ECO:0007669"/>
    <property type="project" value="UniProtKB-UniRule"/>
</dbReference>
<dbReference type="Gene3D" id="3.40.50.1820">
    <property type="entry name" value="alpha/beta hydrolase"/>
    <property type="match status" value="1"/>
</dbReference>
<dbReference type="HAMAP" id="MF_00832">
    <property type="entry name" value="RutD"/>
    <property type="match status" value="1"/>
</dbReference>
<dbReference type="InterPro" id="IPR000073">
    <property type="entry name" value="AB_hydrolase_1"/>
</dbReference>
<dbReference type="InterPro" id="IPR029058">
    <property type="entry name" value="AB_hydrolase_fold"/>
</dbReference>
<dbReference type="InterPro" id="IPR050266">
    <property type="entry name" value="AB_hydrolase_sf"/>
</dbReference>
<dbReference type="InterPro" id="IPR019913">
    <property type="entry name" value="Pyrimidine_utilisation_RutD"/>
</dbReference>
<dbReference type="NCBIfam" id="TIGR03611">
    <property type="entry name" value="RutD"/>
    <property type="match status" value="1"/>
</dbReference>
<dbReference type="PANTHER" id="PTHR43798">
    <property type="entry name" value="MONOACYLGLYCEROL LIPASE"/>
    <property type="match status" value="1"/>
</dbReference>
<dbReference type="Pfam" id="PF00561">
    <property type="entry name" value="Abhydrolase_1"/>
    <property type="match status" value="1"/>
</dbReference>
<dbReference type="SUPFAM" id="SSF53474">
    <property type="entry name" value="alpha/beta-Hydrolases"/>
    <property type="match status" value="1"/>
</dbReference>
<reference key="1">
    <citation type="journal article" date="2010" name="J. Bacteriol.">
        <title>Complete genome sequence of Enterobacter cloacae subsp. cloacae type strain ATCC 13047.</title>
        <authorList>
            <person name="Ren Y."/>
            <person name="Ren Y."/>
            <person name="Zhou Z."/>
            <person name="Guo X."/>
            <person name="Li Y."/>
            <person name="Feng L."/>
            <person name="Wang L."/>
        </authorList>
    </citation>
    <scope>NUCLEOTIDE SEQUENCE [LARGE SCALE GENOMIC DNA]</scope>
    <source>
        <strain>ATCC 13047 / DSM 30054 / NBRC 13535 / NCTC 10005 / WDCM 00083 / NCDC 279-56</strain>
    </source>
</reference>
<protein>
    <recommendedName>
        <fullName evidence="1">Putative carbamate hydrolase RutD</fullName>
        <ecNumber evidence="1">3.5.1.-</ecNumber>
    </recommendedName>
    <alternativeName>
        <fullName evidence="1">Aminohydrolase</fullName>
    </alternativeName>
</protein>
<keyword id="KW-0378">Hydrolase</keyword>
<keyword id="KW-1185">Reference proteome</keyword>
<gene>
    <name evidence="1" type="primary">rutD</name>
    <name type="ordered locus">ECL_02625</name>
</gene>
<evidence type="ECO:0000255" key="1">
    <source>
        <dbReference type="HAMAP-Rule" id="MF_00832"/>
    </source>
</evidence>
<proteinExistence type="inferred from homology"/>
<accession>D5CE35</accession>
<feature type="chain" id="PRO_0000402933" description="Putative carbamate hydrolase RutD">
    <location>
        <begin position="1"/>
        <end position="266"/>
    </location>
</feature>
<comment type="function">
    <text evidence="1">Involved in pyrimidine catabolism. May facilitate the hydrolysis of carbamate, a reaction that can also occur spontaneously.</text>
</comment>
<comment type="catalytic activity">
    <reaction evidence="1">
        <text>carbamate + 2 H(+) = NH4(+) + CO2</text>
        <dbReference type="Rhea" id="RHEA:15649"/>
        <dbReference type="ChEBI" id="CHEBI:13941"/>
        <dbReference type="ChEBI" id="CHEBI:15378"/>
        <dbReference type="ChEBI" id="CHEBI:16526"/>
        <dbReference type="ChEBI" id="CHEBI:28938"/>
    </reaction>
</comment>
<comment type="similarity">
    <text evidence="1">Belongs to the AB hydrolase superfamily. Hydrolase RutD family.</text>
</comment>
<name>RUTD_ENTCC</name>